<name>Y2348_MYCLE</name>
<accession>Q49929</accession>
<organism>
    <name type="scientific">Mycobacterium leprae (strain TN)</name>
    <dbReference type="NCBI Taxonomy" id="272631"/>
    <lineage>
        <taxon>Bacteria</taxon>
        <taxon>Bacillati</taxon>
        <taxon>Actinomycetota</taxon>
        <taxon>Actinomycetes</taxon>
        <taxon>Mycobacteriales</taxon>
        <taxon>Mycobacteriaceae</taxon>
        <taxon>Mycobacterium</taxon>
    </lineage>
</organism>
<reference key="1">
    <citation type="submission" date="1994-03" db="EMBL/GenBank/DDBJ databases">
        <authorList>
            <person name="Smith D.R."/>
            <person name="Robison K."/>
        </authorList>
    </citation>
    <scope>NUCLEOTIDE SEQUENCE [GENOMIC DNA]</scope>
</reference>
<reference key="2">
    <citation type="journal article" date="2001" name="Nature">
        <title>Massive gene decay in the leprosy bacillus.</title>
        <authorList>
            <person name="Cole S.T."/>
            <person name="Eiglmeier K."/>
            <person name="Parkhill J."/>
            <person name="James K.D."/>
            <person name="Thomson N.R."/>
            <person name="Wheeler P.R."/>
            <person name="Honore N."/>
            <person name="Garnier T."/>
            <person name="Churcher C.M."/>
            <person name="Harris D.E."/>
            <person name="Mungall K.L."/>
            <person name="Basham D."/>
            <person name="Brown D."/>
            <person name="Chillingworth T."/>
            <person name="Connor R."/>
            <person name="Davies R.M."/>
            <person name="Devlin K."/>
            <person name="Duthoy S."/>
            <person name="Feltwell T."/>
            <person name="Fraser A."/>
            <person name="Hamlin N."/>
            <person name="Holroyd S."/>
            <person name="Hornsby T."/>
            <person name="Jagels K."/>
            <person name="Lacroix C."/>
            <person name="Maclean J."/>
            <person name="Moule S."/>
            <person name="Murphy L.D."/>
            <person name="Oliver K."/>
            <person name="Quail M.A."/>
            <person name="Rajandream M.A."/>
            <person name="Rutherford K.M."/>
            <person name="Rutter S."/>
            <person name="Seeger K."/>
            <person name="Simon S."/>
            <person name="Simmonds M."/>
            <person name="Skelton J."/>
            <person name="Squares R."/>
            <person name="Squares S."/>
            <person name="Stevens K."/>
            <person name="Taylor K."/>
            <person name="Whitehead S."/>
            <person name="Woodward J.R."/>
            <person name="Barrell B.G."/>
        </authorList>
    </citation>
    <scope>NUCLEOTIDE SEQUENCE [LARGE SCALE GENOMIC DNA]</scope>
    <source>
        <strain>TN</strain>
    </source>
</reference>
<sequence>MKFTLAASGSRGDVEPFAALGLELQRRGHEVRIGVPPDMLRFVESAGLAAVAYGPDTQEFLARDTYSQWRQWWKILPPIKALQQLRQAWADMATDLKSLADGADLVMTGVVYQGVVANVAEYYGIPFGVLHFVPARVNGKIIPSLPSPLNRAILATVWRAHWLLAKKPEDAQRRELGLPKATSLSTRRIVKRGALEIQAYDELCFPGLAAEWAEYGDRRPFVGALTLELPTAADNEVLSWIAAGTPPIYFGFGSMPIVSPTDTVAMIAAACADLGERALISVKPKDLTQVPKFDHVKIVTSVSHAAVFPACRAVVHHGGAGTTAASLRAGVPTLILWIFIEQPVWAAQIKRLKVGAGRRFSATTQRSLAADLRTILAPQYATRAREVANRMSKPDESVNAAADLLEDKASRNKSRTRYQDC</sequence>
<gene>
    <name type="ordered locus">ML2348</name>
    <name type="ORF">L518_C2_147</name>
    <name type="ORF">MLCB2407.02c</name>
</gene>
<proteinExistence type="inferred from homology"/>
<evidence type="ECO:0000305" key="1"/>
<feature type="chain" id="PRO_0000215625" description="Uncharacterized glycosyltransferase ML2348">
    <location>
        <begin position="1"/>
        <end position="421"/>
    </location>
</feature>
<protein>
    <recommendedName>
        <fullName>Uncharacterized glycosyltransferase ML2348</fullName>
        <ecNumber>2.4.-.-</ecNumber>
    </recommendedName>
</protein>
<dbReference type="EC" id="2.4.-.-"/>
<dbReference type="EMBL" id="U00023">
    <property type="protein sequence ID" value="AAA17353.1"/>
    <property type="molecule type" value="Genomic_DNA"/>
</dbReference>
<dbReference type="EMBL" id="AL023596">
    <property type="protein sequence ID" value="CAA19142.1"/>
    <property type="molecule type" value="Genomic_DNA"/>
</dbReference>
<dbReference type="EMBL" id="AL583925">
    <property type="protein sequence ID" value="CAC31864.1"/>
    <property type="molecule type" value="Genomic_DNA"/>
</dbReference>
<dbReference type="PIR" id="S73010">
    <property type="entry name" value="S73010"/>
</dbReference>
<dbReference type="RefSeq" id="NP_302527.1">
    <property type="nucleotide sequence ID" value="NC_002677.1"/>
</dbReference>
<dbReference type="RefSeq" id="WP_010908847.1">
    <property type="nucleotide sequence ID" value="NC_002677.1"/>
</dbReference>
<dbReference type="SMR" id="Q49929"/>
<dbReference type="STRING" id="272631.gene:17576210"/>
<dbReference type="CAZy" id="GT1">
    <property type="family name" value="Glycosyltransferase Family 1"/>
</dbReference>
<dbReference type="KEGG" id="mle:ML2348"/>
<dbReference type="PATRIC" id="fig|272631.5.peg.4507"/>
<dbReference type="Leproma" id="ML2348"/>
<dbReference type="eggNOG" id="COG1819">
    <property type="taxonomic scope" value="Bacteria"/>
</dbReference>
<dbReference type="HOGENOM" id="CLU_000537_8_0_11"/>
<dbReference type="OrthoDB" id="3253247at2"/>
<dbReference type="Proteomes" id="UP000000806">
    <property type="component" value="Chromosome"/>
</dbReference>
<dbReference type="GO" id="GO:0016758">
    <property type="term" value="F:hexosyltransferase activity"/>
    <property type="evidence" value="ECO:0007669"/>
    <property type="project" value="InterPro"/>
</dbReference>
<dbReference type="GO" id="GO:0008194">
    <property type="term" value="F:UDP-glycosyltransferase activity"/>
    <property type="evidence" value="ECO:0007669"/>
    <property type="project" value="InterPro"/>
</dbReference>
<dbReference type="GO" id="GO:0005975">
    <property type="term" value="P:carbohydrate metabolic process"/>
    <property type="evidence" value="ECO:0007669"/>
    <property type="project" value="InterPro"/>
</dbReference>
<dbReference type="GO" id="GO:0030259">
    <property type="term" value="P:lipid glycosylation"/>
    <property type="evidence" value="ECO:0007669"/>
    <property type="project" value="InterPro"/>
</dbReference>
<dbReference type="GO" id="GO:0033072">
    <property type="term" value="P:vancomycin biosynthetic process"/>
    <property type="evidence" value="ECO:0007669"/>
    <property type="project" value="UniProtKB-ARBA"/>
</dbReference>
<dbReference type="CDD" id="cd03784">
    <property type="entry name" value="GT1_Gtf-like"/>
    <property type="match status" value="1"/>
</dbReference>
<dbReference type="FunFam" id="3.40.50.2000:FF:000009">
    <property type="entry name" value="Sterol 3-beta-glucosyltransferase UGT80A2"/>
    <property type="match status" value="1"/>
</dbReference>
<dbReference type="Gene3D" id="3.40.50.2000">
    <property type="entry name" value="Glycogen Phosphorylase B"/>
    <property type="match status" value="2"/>
</dbReference>
<dbReference type="InterPro" id="IPR010610">
    <property type="entry name" value="EryCIII-like_C"/>
</dbReference>
<dbReference type="InterPro" id="IPR050426">
    <property type="entry name" value="Glycosyltransferase_28"/>
</dbReference>
<dbReference type="InterPro" id="IPR004276">
    <property type="entry name" value="GlycoTrans_28_N"/>
</dbReference>
<dbReference type="InterPro" id="IPR002213">
    <property type="entry name" value="UDP_glucos_trans"/>
</dbReference>
<dbReference type="PANTHER" id="PTHR48050">
    <property type="entry name" value="STEROL 3-BETA-GLUCOSYLTRANSFERASE"/>
    <property type="match status" value="1"/>
</dbReference>
<dbReference type="PANTHER" id="PTHR48050:SF13">
    <property type="entry name" value="STEROL 3-BETA-GLUCOSYLTRANSFERASE UGT80A2"/>
    <property type="match status" value="1"/>
</dbReference>
<dbReference type="Pfam" id="PF06722">
    <property type="entry name" value="EryCIII-like_C"/>
    <property type="match status" value="1"/>
</dbReference>
<dbReference type="Pfam" id="PF03033">
    <property type="entry name" value="Glyco_transf_28"/>
    <property type="match status" value="1"/>
</dbReference>
<dbReference type="SUPFAM" id="SSF53756">
    <property type="entry name" value="UDP-Glycosyltransferase/glycogen phosphorylase"/>
    <property type="match status" value="1"/>
</dbReference>
<comment type="similarity">
    <text evidence="1">Belongs to the glycosyltransferase 28 family.</text>
</comment>
<keyword id="KW-0328">Glycosyltransferase</keyword>
<keyword id="KW-1185">Reference proteome</keyword>
<keyword id="KW-0808">Transferase</keyword>